<proteinExistence type="inferred from homology"/>
<gene>
    <name evidence="1" type="primary">psbX</name>
    <name type="ordered locus">Npun_R5949</name>
</gene>
<keyword id="KW-0472">Membrane</keyword>
<keyword id="KW-0602">Photosynthesis</keyword>
<keyword id="KW-0604">Photosystem II</keyword>
<keyword id="KW-1185">Reference proteome</keyword>
<keyword id="KW-0793">Thylakoid</keyword>
<keyword id="KW-0812">Transmembrane</keyword>
<keyword id="KW-1133">Transmembrane helix</keyword>
<evidence type="ECO:0000255" key="1">
    <source>
        <dbReference type="HAMAP-Rule" id="MF_01386"/>
    </source>
</evidence>
<feature type="chain" id="PRO_1000145154" description="Photosystem II reaction center protein X">
    <location>
        <begin position="1"/>
        <end position="39"/>
    </location>
</feature>
<feature type="transmembrane region" description="Helical" evidence="1">
    <location>
        <begin position="10"/>
        <end position="30"/>
    </location>
</feature>
<comment type="function">
    <text evidence="1">Involved in the binding and/or turnover of quinones at the Q(B) site of photosystem II (PSII). PSII is a light-driven water plastoquinone oxidoreductase, using light energy to abstract electrons from H(2)O, generating a proton gradient subsequently used for ATP formation.</text>
</comment>
<comment type="subunit">
    <text evidence="1">PSII is composed of 1 copy each of membrane proteins PsbA, PsbB, PsbC, PsbD, PsbE, PsbF, PsbH, PsbI, PsbJ, PsbK, PsbL, PsbM, PsbT, PsbX, PsbY, PsbZ, Psb30/Ycf12, peripheral proteins PsbO, CyanoQ (PsbQ), PsbU, PsbV and a large number of cofactors. It forms dimeric complexes.</text>
</comment>
<comment type="subcellular location">
    <subcellularLocation>
        <location evidence="1">Cellular thylakoid membrane</location>
        <topology evidence="1">Single-pass membrane protein</topology>
    </subcellularLocation>
</comment>
<comment type="similarity">
    <text evidence="1">Belongs to the PsbX family. Type 1 subfamily.</text>
</comment>
<reference key="1">
    <citation type="journal article" date="2013" name="Plant Physiol.">
        <title>A Nostoc punctiforme Sugar Transporter Necessary to Establish a Cyanobacterium-Plant Symbiosis.</title>
        <authorList>
            <person name="Ekman M."/>
            <person name="Picossi S."/>
            <person name="Campbell E.L."/>
            <person name="Meeks J.C."/>
            <person name="Flores E."/>
        </authorList>
    </citation>
    <scope>NUCLEOTIDE SEQUENCE [LARGE SCALE GENOMIC DNA]</scope>
    <source>
        <strain>ATCC 29133 / PCC 73102</strain>
    </source>
</reference>
<name>PSBX_NOSP7</name>
<organism>
    <name type="scientific">Nostoc punctiforme (strain ATCC 29133 / PCC 73102)</name>
    <dbReference type="NCBI Taxonomy" id="63737"/>
    <lineage>
        <taxon>Bacteria</taxon>
        <taxon>Bacillati</taxon>
        <taxon>Cyanobacteriota</taxon>
        <taxon>Cyanophyceae</taxon>
        <taxon>Nostocales</taxon>
        <taxon>Nostocaceae</taxon>
        <taxon>Nostoc</taxon>
    </lineage>
</organism>
<protein>
    <recommendedName>
        <fullName evidence="1">Photosystem II reaction center protein X</fullName>
    </recommendedName>
</protein>
<accession>B2ITV2</accession>
<sequence>MTPSLANFLWSLLWGTAIVVIPVTVGLIFISQKDKIQRS</sequence>
<dbReference type="EMBL" id="CP001037">
    <property type="protein sequence ID" value="ACC84240.1"/>
    <property type="molecule type" value="Genomic_DNA"/>
</dbReference>
<dbReference type="RefSeq" id="WP_012412183.1">
    <property type="nucleotide sequence ID" value="NC_010628.1"/>
</dbReference>
<dbReference type="SMR" id="B2ITV2"/>
<dbReference type="STRING" id="63737.Npun_R5949"/>
<dbReference type="EnsemblBacteria" id="ACC84240">
    <property type="protein sequence ID" value="ACC84240"/>
    <property type="gene ID" value="Npun_R5949"/>
</dbReference>
<dbReference type="KEGG" id="npu:Npun_R5949"/>
<dbReference type="eggNOG" id="ENOG5033AJK">
    <property type="taxonomic scope" value="Bacteria"/>
</dbReference>
<dbReference type="HOGENOM" id="CLU_212837_1_0_3"/>
<dbReference type="OrthoDB" id="541645at2"/>
<dbReference type="PhylomeDB" id="B2ITV2"/>
<dbReference type="Proteomes" id="UP000001191">
    <property type="component" value="Chromosome"/>
</dbReference>
<dbReference type="GO" id="GO:0009523">
    <property type="term" value="C:photosystem II"/>
    <property type="evidence" value="ECO:0007669"/>
    <property type="project" value="UniProtKB-KW"/>
</dbReference>
<dbReference type="GO" id="GO:0031676">
    <property type="term" value="C:plasma membrane-derived thylakoid membrane"/>
    <property type="evidence" value="ECO:0007669"/>
    <property type="project" value="UniProtKB-SubCell"/>
</dbReference>
<dbReference type="GO" id="GO:0015979">
    <property type="term" value="P:photosynthesis"/>
    <property type="evidence" value="ECO:0007669"/>
    <property type="project" value="UniProtKB-UniRule"/>
</dbReference>
<dbReference type="Gene3D" id="1.20.5.510">
    <property type="entry name" value="Single helix bin"/>
    <property type="match status" value="1"/>
</dbReference>
<dbReference type="HAMAP" id="MF_01386">
    <property type="entry name" value="PSII_PsbX_1"/>
    <property type="match status" value="1"/>
</dbReference>
<dbReference type="InterPro" id="IPR009518">
    <property type="entry name" value="PSII_PsbX"/>
</dbReference>
<dbReference type="InterPro" id="IPR023431">
    <property type="entry name" value="PSII_PsbX_type_1_subfam"/>
</dbReference>
<dbReference type="Pfam" id="PF06596">
    <property type="entry name" value="PsbX"/>
    <property type="match status" value="1"/>
</dbReference>